<evidence type="ECO:0000255" key="1">
    <source>
        <dbReference type="HAMAP-Rule" id="MF_00049"/>
    </source>
</evidence>
<organism>
    <name type="scientific">Streptococcus pyogenes serotype M12 (strain MGAS2096)</name>
    <dbReference type="NCBI Taxonomy" id="370553"/>
    <lineage>
        <taxon>Bacteria</taxon>
        <taxon>Bacillati</taxon>
        <taxon>Bacillota</taxon>
        <taxon>Bacilli</taxon>
        <taxon>Lactobacillales</taxon>
        <taxon>Streptococcaceae</taxon>
        <taxon>Streptococcus</taxon>
    </lineage>
</organism>
<accession>Q1JDV2</accession>
<proteinExistence type="inferred from homology"/>
<protein>
    <recommendedName>
        <fullName evidence="1">Leucine--tRNA ligase</fullName>
        <ecNumber evidence="1">6.1.1.4</ecNumber>
    </recommendedName>
    <alternativeName>
        <fullName evidence="1">Leucyl-tRNA synthetase</fullName>
        <shortName evidence="1">LeuRS</shortName>
    </alternativeName>
</protein>
<reference key="1">
    <citation type="journal article" date="2006" name="Proc. Natl. Acad. Sci. U.S.A.">
        <title>Molecular genetic anatomy of inter- and intraserotype variation in the human bacterial pathogen group A Streptococcus.</title>
        <authorList>
            <person name="Beres S.B."/>
            <person name="Richter E.W."/>
            <person name="Nagiec M.J."/>
            <person name="Sumby P."/>
            <person name="Porcella S.F."/>
            <person name="DeLeo F.R."/>
            <person name="Musser J.M."/>
        </authorList>
    </citation>
    <scope>NUCLEOTIDE SEQUENCE [LARGE SCALE GENOMIC DNA]</scope>
    <source>
        <strain>MGAS2096</strain>
    </source>
</reference>
<name>SYL_STRPB</name>
<comment type="catalytic activity">
    <reaction evidence="1">
        <text>tRNA(Leu) + L-leucine + ATP = L-leucyl-tRNA(Leu) + AMP + diphosphate</text>
        <dbReference type="Rhea" id="RHEA:11688"/>
        <dbReference type="Rhea" id="RHEA-COMP:9613"/>
        <dbReference type="Rhea" id="RHEA-COMP:9622"/>
        <dbReference type="ChEBI" id="CHEBI:30616"/>
        <dbReference type="ChEBI" id="CHEBI:33019"/>
        <dbReference type="ChEBI" id="CHEBI:57427"/>
        <dbReference type="ChEBI" id="CHEBI:78442"/>
        <dbReference type="ChEBI" id="CHEBI:78494"/>
        <dbReference type="ChEBI" id="CHEBI:456215"/>
        <dbReference type="EC" id="6.1.1.4"/>
    </reaction>
</comment>
<comment type="subcellular location">
    <subcellularLocation>
        <location evidence="1">Cytoplasm</location>
    </subcellularLocation>
</comment>
<comment type="similarity">
    <text evidence="1">Belongs to the class-I aminoacyl-tRNA synthetase family.</text>
</comment>
<feature type="chain" id="PRO_1000009444" description="Leucine--tRNA ligase">
    <location>
        <begin position="1"/>
        <end position="833"/>
    </location>
</feature>
<feature type="short sequence motif" description="'HIGH' region">
    <location>
        <begin position="41"/>
        <end position="52"/>
    </location>
</feature>
<feature type="short sequence motif" description="'KMSKS' region">
    <location>
        <begin position="610"/>
        <end position="614"/>
    </location>
</feature>
<feature type="binding site" evidence="1">
    <location>
        <position position="613"/>
    </location>
    <ligand>
        <name>ATP</name>
        <dbReference type="ChEBI" id="CHEBI:30616"/>
    </ligand>
</feature>
<sequence length="833" mass="93865">MTFYDHTAIEPKWQAFWADNHTFKTGTDASKPKFYALDMFPYPSGAGLHVGHPEGYTATDILSRFKRAQGHNVLHPMGWDAFGLPAEQYAMDTGNDPAEFTAENIANFKRQINALGFSYDWDREVNTTDPNYYKWTQWIFTKLYEKGLAYEAEVPVNWVEELGTAIANEEVLPDGTSERGGYPVVRKPMRQWMLKITAYAERLLEDLEEVDWPESIKDMQRNWIGKSTGANVTFKVKDTDKDFTVFTTRPDTLFGATYAVLAPEHALVDAITTSDQAEAVADYKRQASLKSDLARTDLAKEKTGVWTGSYAINPVNGKEMPVWIADYVLASYGTGAIMAVPAHDERDWEFAKQFNLDIIPVLEGGNVEEAAFTEDGLHINSDFLDGLDKASAIAKMVEWLEAEGVGNENVTYRLRDWLFSRQRYWGEPIPIIHWEDGTSTAVPESELPLVLPVTKDIRPSGTGESPLANVTDWLEVTREDGVKGRRETNTMPQWAGSSWYYLRYIDPHNTEKLADEELLKQWLPVDIYVGGAEHAVLHLLYARFWHKVLYDLGVVPTKEPFQKLFNQGMILGTSYRDSRGALVATDKVEKRDGSFFHVETGEELEQAPAKMSKSLKNVVNPDDVVEQYGADTLRVYEMFMGPLDASIAWSEEGLEGSRKFLDRVYRLITTKEITEENSGALDKVYNETVKAVTEQVDQMKFNTAIAQLMVFVNAANKEDKLFSDYAKGFVQLIAPFAPHLGEELWQALTASGESISYVPWPSYDESKLVENDVEIVVQIKGKVKAKLVVAKDLSREELQEVALANEKVQAEIAGKDIIKVIAVPNKLVNIVIK</sequence>
<gene>
    <name evidence="1" type="primary">leuS</name>
    <name type="ordered locus">MGAS2096_Spy0154</name>
</gene>
<dbReference type="EC" id="6.1.1.4" evidence="1"/>
<dbReference type="EMBL" id="CP000261">
    <property type="protein sequence ID" value="ABF35206.1"/>
    <property type="molecule type" value="Genomic_DNA"/>
</dbReference>
<dbReference type="SMR" id="Q1JDV2"/>
<dbReference type="KEGG" id="spj:MGAS2096_Spy0154"/>
<dbReference type="HOGENOM" id="CLU_004427_0_0_9"/>
<dbReference type="GO" id="GO:0005829">
    <property type="term" value="C:cytosol"/>
    <property type="evidence" value="ECO:0007669"/>
    <property type="project" value="TreeGrafter"/>
</dbReference>
<dbReference type="GO" id="GO:0002161">
    <property type="term" value="F:aminoacyl-tRNA deacylase activity"/>
    <property type="evidence" value="ECO:0007669"/>
    <property type="project" value="InterPro"/>
</dbReference>
<dbReference type="GO" id="GO:0005524">
    <property type="term" value="F:ATP binding"/>
    <property type="evidence" value="ECO:0007669"/>
    <property type="project" value="UniProtKB-UniRule"/>
</dbReference>
<dbReference type="GO" id="GO:0004823">
    <property type="term" value="F:leucine-tRNA ligase activity"/>
    <property type="evidence" value="ECO:0007669"/>
    <property type="project" value="UniProtKB-UniRule"/>
</dbReference>
<dbReference type="GO" id="GO:0006429">
    <property type="term" value="P:leucyl-tRNA aminoacylation"/>
    <property type="evidence" value="ECO:0007669"/>
    <property type="project" value="UniProtKB-UniRule"/>
</dbReference>
<dbReference type="CDD" id="cd07958">
    <property type="entry name" value="Anticodon_Ia_Leu_BEm"/>
    <property type="match status" value="1"/>
</dbReference>
<dbReference type="CDD" id="cd00812">
    <property type="entry name" value="LeuRS_core"/>
    <property type="match status" value="1"/>
</dbReference>
<dbReference type="FunFam" id="1.10.730.10:FF:000012">
    <property type="entry name" value="Leucine--tRNA ligase"/>
    <property type="match status" value="1"/>
</dbReference>
<dbReference type="FunFam" id="3.40.50.620:FF:000056">
    <property type="entry name" value="Leucine--tRNA ligase"/>
    <property type="match status" value="1"/>
</dbReference>
<dbReference type="FunFam" id="3.40.50.620:FF:000077">
    <property type="entry name" value="Leucine--tRNA ligase"/>
    <property type="match status" value="1"/>
</dbReference>
<dbReference type="FunFam" id="1.10.730.10:FF:000011">
    <property type="entry name" value="Leucine--tRNA ligase chloroplastic/mitochondrial"/>
    <property type="match status" value="1"/>
</dbReference>
<dbReference type="Gene3D" id="3.40.50.620">
    <property type="entry name" value="HUPs"/>
    <property type="match status" value="2"/>
</dbReference>
<dbReference type="Gene3D" id="1.10.730.10">
    <property type="entry name" value="Isoleucyl-tRNA Synthetase, Domain 1"/>
    <property type="match status" value="1"/>
</dbReference>
<dbReference type="Gene3D" id="3.90.740.10">
    <property type="entry name" value="Valyl/Leucyl/Isoleucyl-tRNA synthetase, editing domain"/>
    <property type="match status" value="1"/>
</dbReference>
<dbReference type="HAMAP" id="MF_00049_B">
    <property type="entry name" value="Leu_tRNA_synth_B"/>
    <property type="match status" value="1"/>
</dbReference>
<dbReference type="InterPro" id="IPR001412">
    <property type="entry name" value="aa-tRNA-synth_I_CS"/>
</dbReference>
<dbReference type="InterPro" id="IPR002300">
    <property type="entry name" value="aa-tRNA-synth_Ia"/>
</dbReference>
<dbReference type="InterPro" id="IPR002302">
    <property type="entry name" value="Leu-tRNA-ligase"/>
</dbReference>
<dbReference type="InterPro" id="IPR025709">
    <property type="entry name" value="Leu_tRNA-synth_edit"/>
</dbReference>
<dbReference type="InterPro" id="IPR013155">
    <property type="entry name" value="M/V/L/I-tRNA-synth_anticd-bd"/>
</dbReference>
<dbReference type="InterPro" id="IPR015413">
    <property type="entry name" value="Methionyl/Leucyl_tRNA_Synth"/>
</dbReference>
<dbReference type="InterPro" id="IPR014729">
    <property type="entry name" value="Rossmann-like_a/b/a_fold"/>
</dbReference>
<dbReference type="InterPro" id="IPR009080">
    <property type="entry name" value="tRNAsynth_Ia_anticodon-bd"/>
</dbReference>
<dbReference type="InterPro" id="IPR009008">
    <property type="entry name" value="Val/Leu/Ile-tRNA-synth_edit"/>
</dbReference>
<dbReference type="NCBIfam" id="TIGR00396">
    <property type="entry name" value="leuS_bact"/>
    <property type="match status" value="1"/>
</dbReference>
<dbReference type="PANTHER" id="PTHR43740:SF2">
    <property type="entry name" value="LEUCINE--TRNA LIGASE, MITOCHONDRIAL"/>
    <property type="match status" value="1"/>
</dbReference>
<dbReference type="PANTHER" id="PTHR43740">
    <property type="entry name" value="LEUCYL-TRNA SYNTHETASE"/>
    <property type="match status" value="1"/>
</dbReference>
<dbReference type="Pfam" id="PF08264">
    <property type="entry name" value="Anticodon_1"/>
    <property type="match status" value="1"/>
</dbReference>
<dbReference type="Pfam" id="PF00133">
    <property type="entry name" value="tRNA-synt_1"/>
    <property type="match status" value="2"/>
</dbReference>
<dbReference type="Pfam" id="PF13603">
    <property type="entry name" value="tRNA-synt_1_2"/>
    <property type="match status" value="1"/>
</dbReference>
<dbReference type="Pfam" id="PF09334">
    <property type="entry name" value="tRNA-synt_1g"/>
    <property type="match status" value="1"/>
</dbReference>
<dbReference type="PRINTS" id="PR00985">
    <property type="entry name" value="TRNASYNTHLEU"/>
</dbReference>
<dbReference type="SUPFAM" id="SSF47323">
    <property type="entry name" value="Anticodon-binding domain of a subclass of class I aminoacyl-tRNA synthetases"/>
    <property type="match status" value="1"/>
</dbReference>
<dbReference type="SUPFAM" id="SSF52374">
    <property type="entry name" value="Nucleotidylyl transferase"/>
    <property type="match status" value="1"/>
</dbReference>
<dbReference type="SUPFAM" id="SSF50677">
    <property type="entry name" value="ValRS/IleRS/LeuRS editing domain"/>
    <property type="match status" value="1"/>
</dbReference>
<dbReference type="PROSITE" id="PS00178">
    <property type="entry name" value="AA_TRNA_LIGASE_I"/>
    <property type="match status" value="1"/>
</dbReference>
<keyword id="KW-0030">Aminoacyl-tRNA synthetase</keyword>
<keyword id="KW-0067">ATP-binding</keyword>
<keyword id="KW-0963">Cytoplasm</keyword>
<keyword id="KW-0436">Ligase</keyword>
<keyword id="KW-0547">Nucleotide-binding</keyword>
<keyword id="KW-0648">Protein biosynthesis</keyword>